<comment type="function">
    <text evidence="1">Binds as a heterodimer with protein bS6 to the central domain of the 16S rRNA, where it helps stabilize the platform of the 30S subunit.</text>
</comment>
<comment type="subunit">
    <text evidence="1">Part of the 30S ribosomal subunit. Forms a tight heterodimer with protein bS6.</text>
</comment>
<comment type="similarity">
    <text evidence="1">Belongs to the bacterial ribosomal protein bS18 family.</text>
</comment>
<evidence type="ECO:0000255" key="1">
    <source>
        <dbReference type="HAMAP-Rule" id="MF_00270"/>
    </source>
</evidence>
<evidence type="ECO:0000305" key="2"/>
<organism>
    <name type="scientific">Staphylococcus aureus (strain N315)</name>
    <dbReference type="NCBI Taxonomy" id="158879"/>
    <lineage>
        <taxon>Bacteria</taxon>
        <taxon>Bacillati</taxon>
        <taxon>Bacillota</taxon>
        <taxon>Bacilli</taxon>
        <taxon>Bacillales</taxon>
        <taxon>Staphylococcaceae</taxon>
        <taxon>Staphylococcus</taxon>
    </lineage>
</organism>
<name>RS18_STAAN</name>
<sequence>MAGGPRRGGRRRKKVCYFTANGITHIDYKDTELLKRFISERGKILPRRVTGTSAKYQRMLTTAIKRSRHMALLPYVKEEQ</sequence>
<dbReference type="EMBL" id="BA000018">
    <property type="protein sequence ID" value="BAB41579.1"/>
    <property type="molecule type" value="Genomic_DNA"/>
</dbReference>
<dbReference type="PIR" id="H89802">
    <property type="entry name" value="H89802"/>
</dbReference>
<dbReference type="RefSeq" id="WP_000897044.1">
    <property type="nucleotide sequence ID" value="NC_002745.2"/>
</dbReference>
<dbReference type="SMR" id="P66468"/>
<dbReference type="EnsemblBacteria" id="BAB41579">
    <property type="protein sequence ID" value="BAB41579"/>
    <property type="gene ID" value="BAB41579"/>
</dbReference>
<dbReference type="GeneID" id="98344693"/>
<dbReference type="KEGG" id="sau:SA0354"/>
<dbReference type="HOGENOM" id="CLU_148710_2_2_9"/>
<dbReference type="GO" id="GO:0022627">
    <property type="term" value="C:cytosolic small ribosomal subunit"/>
    <property type="evidence" value="ECO:0007669"/>
    <property type="project" value="TreeGrafter"/>
</dbReference>
<dbReference type="GO" id="GO:0070181">
    <property type="term" value="F:small ribosomal subunit rRNA binding"/>
    <property type="evidence" value="ECO:0007669"/>
    <property type="project" value="TreeGrafter"/>
</dbReference>
<dbReference type="GO" id="GO:0003735">
    <property type="term" value="F:structural constituent of ribosome"/>
    <property type="evidence" value="ECO:0007669"/>
    <property type="project" value="InterPro"/>
</dbReference>
<dbReference type="GO" id="GO:0006412">
    <property type="term" value="P:translation"/>
    <property type="evidence" value="ECO:0007669"/>
    <property type="project" value="UniProtKB-UniRule"/>
</dbReference>
<dbReference type="FunFam" id="4.10.640.10:FF:000003">
    <property type="entry name" value="30S ribosomal protein S18"/>
    <property type="match status" value="1"/>
</dbReference>
<dbReference type="Gene3D" id="4.10.640.10">
    <property type="entry name" value="Ribosomal protein S18"/>
    <property type="match status" value="1"/>
</dbReference>
<dbReference type="HAMAP" id="MF_00270">
    <property type="entry name" value="Ribosomal_bS18"/>
    <property type="match status" value="1"/>
</dbReference>
<dbReference type="InterPro" id="IPR001648">
    <property type="entry name" value="Ribosomal_bS18"/>
</dbReference>
<dbReference type="InterPro" id="IPR018275">
    <property type="entry name" value="Ribosomal_bS18_CS"/>
</dbReference>
<dbReference type="InterPro" id="IPR036870">
    <property type="entry name" value="Ribosomal_bS18_sf"/>
</dbReference>
<dbReference type="NCBIfam" id="TIGR00165">
    <property type="entry name" value="S18"/>
    <property type="match status" value="1"/>
</dbReference>
<dbReference type="PANTHER" id="PTHR13479">
    <property type="entry name" value="30S RIBOSOMAL PROTEIN S18"/>
    <property type="match status" value="1"/>
</dbReference>
<dbReference type="PANTHER" id="PTHR13479:SF40">
    <property type="entry name" value="SMALL RIBOSOMAL SUBUNIT PROTEIN BS18M"/>
    <property type="match status" value="1"/>
</dbReference>
<dbReference type="Pfam" id="PF01084">
    <property type="entry name" value="Ribosomal_S18"/>
    <property type="match status" value="1"/>
</dbReference>
<dbReference type="PRINTS" id="PR00974">
    <property type="entry name" value="RIBOSOMALS18"/>
</dbReference>
<dbReference type="SUPFAM" id="SSF46911">
    <property type="entry name" value="Ribosomal protein S18"/>
    <property type="match status" value="1"/>
</dbReference>
<dbReference type="PROSITE" id="PS00057">
    <property type="entry name" value="RIBOSOMAL_S18"/>
    <property type="match status" value="1"/>
</dbReference>
<protein>
    <recommendedName>
        <fullName evidence="1">Small ribosomal subunit protein bS18</fullName>
    </recommendedName>
    <alternativeName>
        <fullName evidence="2">30S ribosomal protein S18</fullName>
    </alternativeName>
</protein>
<feature type="chain" id="PRO_0000111226" description="Small ribosomal subunit protein bS18">
    <location>
        <begin position="1"/>
        <end position="80"/>
    </location>
</feature>
<accession>P66468</accession>
<accession>Q99WL0</accession>
<proteinExistence type="evidence at protein level"/>
<reference key="1">
    <citation type="journal article" date="2001" name="Lancet">
        <title>Whole genome sequencing of meticillin-resistant Staphylococcus aureus.</title>
        <authorList>
            <person name="Kuroda M."/>
            <person name="Ohta T."/>
            <person name="Uchiyama I."/>
            <person name="Baba T."/>
            <person name="Yuzawa H."/>
            <person name="Kobayashi I."/>
            <person name="Cui L."/>
            <person name="Oguchi A."/>
            <person name="Aoki K."/>
            <person name="Nagai Y."/>
            <person name="Lian J.-Q."/>
            <person name="Ito T."/>
            <person name="Kanamori M."/>
            <person name="Matsumaru H."/>
            <person name="Maruyama A."/>
            <person name="Murakami H."/>
            <person name="Hosoyama A."/>
            <person name="Mizutani-Ui Y."/>
            <person name="Takahashi N.K."/>
            <person name="Sawano T."/>
            <person name="Inoue R."/>
            <person name="Kaito C."/>
            <person name="Sekimizu K."/>
            <person name="Hirakawa H."/>
            <person name="Kuhara S."/>
            <person name="Goto S."/>
            <person name="Yabuzaki J."/>
            <person name="Kanehisa M."/>
            <person name="Yamashita A."/>
            <person name="Oshima K."/>
            <person name="Furuya K."/>
            <person name="Yoshino C."/>
            <person name="Shiba T."/>
            <person name="Hattori M."/>
            <person name="Ogasawara N."/>
            <person name="Hayashi H."/>
            <person name="Hiramatsu K."/>
        </authorList>
    </citation>
    <scope>NUCLEOTIDE SEQUENCE [LARGE SCALE GENOMIC DNA]</scope>
    <source>
        <strain>N315</strain>
    </source>
</reference>
<reference key="2">
    <citation type="submission" date="2007-10" db="UniProtKB">
        <title>Shotgun proteomic analysis of total and membrane protein extracts of S. aureus strain N315.</title>
        <authorList>
            <person name="Vaezzadeh A.R."/>
            <person name="Deshusses J."/>
            <person name="Lescuyer P."/>
            <person name="Hochstrasser D.F."/>
        </authorList>
    </citation>
    <scope>IDENTIFICATION BY MASS SPECTROMETRY [LARGE SCALE ANALYSIS]</scope>
    <source>
        <strain>N315</strain>
    </source>
</reference>
<gene>
    <name evidence="1" type="primary">rpsR</name>
    <name type="ordered locus">SA0354</name>
</gene>
<keyword id="KW-0687">Ribonucleoprotein</keyword>
<keyword id="KW-0689">Ribosomal protein</keyword>
<keyword id="KW-0694">RNA-binding</keyword>
<keyword id="KW-0699">rRNA-binding</keyword>